<dbReference type="EMBL" id="CP000036">
    <property type="protein sequence ID" value="ABB67313.1"/>
    <property type="molecule type" value="Genomic_DNA"/>
</dbReference>
<dbReference type="RefSeq" id="WP_001272926.1">
    <property type="nucleotide sequence ID" value="NC_007613.1"/>
</dbReference>
<dbReference type="SMR" id="Q31X95"/>
<dbReference type="KEGG" id="sbo:SBO_2787"/>
<dbReference type="HOGENOM" id="CLU_002472_4_0_6"/>
<dbReference type="Proteomes" id="UP000007067">
    <property type="component" value="Chromosome"/>
</dbReference>
<dbReference type="GO" id="GO:0005829">
    <property type="term" value="C:cytosol"/>
    <property type="evidence" value="ECO:0007669"/>
    <property type="project" value="TreeGrafter"/>
</dbReference>
<dbReference type="GO" id="GO:0005524">
    <property type="term" value="F:ATP binding"/>
    <property type="evidence" value="ECO:0007669"/>
    <property type="project" value="UniProtKB-UniRule"/>
</dbReference>
<dbReference type="GO" id="GO:0140664">
    <property type="term" value="F:ATP-dependent DNA damage sensor activity"/>
    <property type="evidence" value="ECO:0007669"/>
    <property type="project" value="InterPro"/>
</dbReference>
<dbReference type="GO" id="GO:0003684">
    <property type="term" value="F:damaged DNA binding"/>
    <property type="evidence" value="ECO:0007669"/>
    <property type="project" value="UniProtKB-UniRule"/>
</dbReference>
<dbReference type="GO" id="GO:0030983">
    <property type="term" value="F:mismatched DNA binding"/>
    <property type="evidence" value="ECO:0007669"/>
    <property type="project" value="InterPro"/>
</dbReference>
<dbReference type="GO" id="GO:0006298">
    <property type="term" value="P:mismatch repair"/>
    <property type="evidence" value="ECO:0007669"/>
    <property type="project" value="UniProtKB-UniRule"/>
</dbReference>
<dbReference type="CDD" id="cd03284">
    <property type="entry name" value="ABC_MutS1"/>
    <property type="match status" value="1"/>
</dbReference>
<dbReference type="FunFam" id="1.10.1420.10:FF:000002">
    <property type="entry name" value="DNA mismatch repair protein MutS"/>
    <property type="match status" value="1"/>
</dbReference>
<dbReference type="FunFam" id="3.30.420.110:FF:000001">
    <property type="entry name" value="DNA mismatch repair protein MutS"/>
    <property type="match status" value="1"/>
</dbReference>
<dbReference type="FunFam" id="3.40.1170.10:FF:000001">
    <property type="entry name" value="DNA mismatch repair protein MutS"/>
    <property type="match status" value="1"/>
</dbReference>
<dbReference type="FunFam" id="3.40.50.300:FF:000283">
    <property type="entry name" value="DNA mismatch repair protein MutS"/>
    <property type="match status" value="1"/>
</dbReference>
<dbReference type="Gene3D" id="1.10.1420.10">
    <property type="match status" value="2"/>
</dbReference>
<dbReference type="Gene3D" id="6.10.140.430">
    <property type="match status" value="1"/>
</dbReference>
<dbReference type="Gene3D" id="3.40.1170.10">
    <property type="entry name" value="DNA repair protein MutS, domain I"/>
    <property type="match status" value="1"/>
</dbReference>
<dbReference type="Gene3D" id="3.30.420.110">
    <property type="entry name" value="MutS, connector domain"/>
    <property type="match status" value="1"/>
</dbReference>
<dbReference type="Gene3D" id="3.40.50.300">
    <property type="entry name" value="P-loop containing nucleotide triphosphate hydrolases"/>
    <property type="match status" value="1"/>
</dbReference>
<dbReference type="HAMAP" id="MF_00096">
    <property type="entry name" value="MutS"/>
    <property type="match status" value="1"/>
</dbReference>
<dbReference type="InterPro" id="IPR005748">
    <property type="entry name" value="DNA_mismatch_repair_MutS"/>
</dbReference>
<dbReference type="InterPro" id="IPR007695">
    <property type="entry name" value="DNA_mismatch_repair_MutS-lik_N"/>
</dbReference>
<dbReference type="InterPro" id="IPR017261">
    <property type="entry name" value="DNA_mismatch_repair_MutS/MSH"/>
</dbReference>
<dbReference type="InterPro" id="IPR000432">
    <property type="entry name" value="DNA_mismatch_repair_MutS_C"/>
</dbReference>
<dbReference type="InterPro" id="IPR007861">
    <property type="entry name" value="DNA_mismatch_repair_MutS_clamp"/>
</dbReference>
<dbReference type="InterPro" id="IPR007696">
    <property type="entry name" value="DNA_mismatch_repair_MutS_core"/>
</dbReference>
<dbReference type="InterPro" id="IPR016151">
    <property type="entry name" value="DNA_mismatch_repair_MutS_N"/>
</dbReference>
<dbReference type="InterPro" id="IPR036187">
    <property type="entry name" value="DNA_mismatch_repair_MutS_sf"/>
</dbReference>
<dbReference type="InterPro" id="IPR007860">
    <property type="entry name" value="DNA_mmatch_repair_MutS_con_dom"/>
</dbReference>
<dbReference type="InterPro" id="IPR045076">
    <property type="entry name" value="MutS"/>
</dbReference>
<dbReference type="InterPro" id="IPR036678">
    <property type="entry name" value="MutS_con_dom_sf"/>
</dbReference>
<dbReference type="InterPro" id="IPR027417">
    <property type="entry name" value="P-loop_NTPase"/>
</dbReference>
<dbReference type="NCBIfam" id="TIGR01070">
    <property type="entry name" value="mutS1"/>
    <property type="match status" value="1"/>
</dbReference>
<dbReference type="NCBIfam" id="NF003810">
    <property type="entry name" value="PRK05399.1"/>
    <property type="match status" value="1"/>
</dbReference>
<dbReference type="PANTHER" id="PTHR11361:SF34">
    <property type="entry name" value="DNA MISMATCH REPAIR PROTEIN MSH1, MITOCHONDRIAL"/>
    <property type="match status" value="1"/>
</dbReference>
<dbReference type="PANTHER" id="PTHR11361">
    <property type="entry name" value="DNA MISMATCH REPAIR PROTEIN MUTS FAMILY MEMBER"/>
    <property type="match status" value="1"/>
</dbReference>
<dbReference type="Pfam" id="PF01624">
    <property type="entry name" value="MutS_I"/>
    <property type="match status" value="1"/>
</dbReference>
<dbReference type="Pfam" id="PF05188">
    <property type="entry name" value="MutS_II"/>
    <property type="match status" value="1"/>
</dbReference>
<dbReference type="Pfam" id="PF05192">
    <property type="entry name" value="MutS_III"/>
    <property type="match status" value="1"/>
</dbReference>
<dbReference type="Pfam" id="PF05190">
    <property type="entry name" value="MutS_IV"/>
    <property type="match status" value="1"/>
</dbReference>
<dbReference type="Pfam" id="PF00488">
    <property type="entry name" value="MutS_V"/>
    <property type="match status" value="1"/>
</dbReference>
<dbReference type="PIRSF" id="PIRSF037677">
    <property type="entry name" value="DNA_mis_repair_Msh6"/>
    <property type="match status" value="1"/>
</dbReference>
<dbReference type="SMART" id="SM00534">
    <property type="entry name" value="MUTSac"/>
    <property type="match status" value="1"/>
</dbReference>
<dbReference type="SMART" id="SM00533">
    <property type="entry name" value="MUTSd"/>
    <property type="match status" value="1"/>
</dbReference>
<dbReference type="SUPFAM" id="SSF55271">
    <property type="entry name" value="DNA repair protein MutS, domain I"/>
    <property type="match status" value="1"/>
</dbReference>
<dbReference type="SUPFAM" id="SSF53150">
    <property type="entry name" value="DNA repair protein MutS, domain II"/>
    <property type="match status" value="1"/>
</dbReference>
<dbReference type="SUPFAM" id="SSF48334">
    <property type="entry name" value="DNA repair protein MutS, domain III"/>
    <property type="match status" value="1"/>
</dbReference>
<dbReference type="SUPFAM" id="SSF52540">
    <property type="entry name" value="P-loop containing nucleoside triphosphate hydrolases"/>
    <property type="match status" value="1"/>
</dbReference>
<dbReference type="PROSITE" id="PS00486">
    <property type="entry name" value="DNA_MISMATCH_REPAIR_2"/>
    <property type="match status" value="1"/>
</dbReference>
<organism>
    <name type="scientific">Shigella boydii serotype 4 (strain Sb227)</name>
    <dbReference type="NCBI Taxonomy" id="300268"/>
    <lineage>
        <taxon>Bacteria</taxon>
        <taxon>Pseudomonadati</taxon>
        <taxon>Pseudomonadota</taxon>
        <taxon>Gammaproteobacteria</taxon>
        <taxon>Enterobacterales</taxon>
        <taxon>Enterobacteriaceae</taxon>
        <taxon>Shigella</taxon>
    </lineage>
</organism>
<evidence type="ECO:0000255" key="1">
    <source>
        <dbReference type="HAMAP-Rule" id="MF_00096"/>
    </source>
</evidence>
<name>MUTS_SHIBS</name>
<feature type="chain" id="PRO_0000224403" description="DNA mismatch repair protein MutS">
    <location>
        <begin position="1"/>
        <end position="853"/>
    </location>
</feature>
<feature type="binding site" evidence="1">
    <location>
        <begin position="614"/>
        <end position="621"/>
    </location>
    <ligand>
        <name>ATP</name>
        <dbReference type="ChEBI" id="CHEBI:30616"/>
    </ligand>
</feature>
<proteinExistence type="inferred from homology"/>
<keyword id="KW-0067">ATP-binding</keyword>
<keyword id="KW-0227">DNA damage</keyword>
<keyword id="KW-0234">DNA repair</keyword>
<keyword id="KW-0238">DNA-binding</keyword>
<keyword id="KW-0547">Nucleotide-binding</keyword>
<reference key="1">
    <citation type="journal article" date="2005" name="Nucleic Acids Res.">
        <title>Genome dynamics and diversity of Shigella species, the etiologic agents of bacillary dysentery.</title>
        <authorList>
            <person name="Yang F."/>
            <person name="Yang J."/>
            <person name="Zhang X."/>
            <person name="Chen L."/>
            <person name="Jiang Y."/>
            <person name="Yan Y."/>
            <person name="Tang X."/>
            <person name="Wang J."/>
            <person name="Xiong Z."/>
            <person name="Dong J."/>
            <person name="Xue Y."/>
            <person name="Zhu Y."/>
            <person name="Xu X."/>
            <person name="Sun L."/>
            <person name="Chen S."/>
            <person name="Nie H."/>
            <person name="Peng J."/>
            <person name="Xu J."/>
            <person name="Wang Y."/>
            <person name="Yuan Z."/>
            <person name="Wen Y."/>
            <person name="Yao Z."/>
            <person name="Shen Y."/>
            <person name="Qiang B."/>
            <person name="Hou Y."/>
            <person name="Yu J."/>
            <person name="Jin Q."/>
        </authorList>
    </citation>
    <scope>NUCLEOTIDE SEQUENCE [LARGE SCALE GENOMIC DNA]</scope>
    <source>
        <strain>Sb227</strain>
    </source>
</reference>
<gene>
    <name evidence="1" type="primary">mutS</name>
    <name type="ordered locus">SBO_2787</name>
</gene>
<protein>
    <recommendedName>
        <fullName evidence="1">DNA mismatch repair protein MutS</fullName>
    </recommendedName>
</protein>
<comment type="function">
    <text evidence="1">This protein is involved in the repair of mismatches in DNA. It is possible that it carries out the mismatch recognition step. This protein has a weak ATPase activity.</text>
</comment>
<comment type="similarity">
    <text evidence="1">Belongs to the DNA mismatch repair MutS family.</text>
</comment>
<accession>Q31X95</accession>
<sequence>MSAIENFDAHTPMMQQYLRLKAQHPEILLFYRMGDFYELFYDDAKRASQLLDISLTKRGASAGEPIPMAGIPYHAVENYLAKLVNQGESVAICEQIGDPATSKGPVERKVVRIVTPGTISDEALLQERQDNLLAAIWQDSKGFGYATLDISSGRFRLSEPADRETMAAELQRTNPAELLYAEDFAEMSLIEGRRGLRRRPLWEFEIDTARQQLNLQFGTRDLVGFGVENAPRGLCAAGCLLQYAKDTQRTTLPHIRSITMEREQDSIIMDAATRRNLEITQNLAGGAENTLASVLDCTVTPMGSRMLKRWLHMPVRDTRVLLERQQTIGALQDFTAGLQPVLRQVGDLERILARLALRTARPRDLARMRHAFQQLPELRAQLETVDSAPVQALREKMGEFAELRDLLERAIIDTPPVLVRDGGVIASGYNEELDEWRALADGATDYLERLEVRERERTGLDTLKVGFNAVHGYYIQISRGQSHLAPINYMRRQTLKNAERYIIPELKEYEDKVLTSKGKALALEKQLYEELFDLLLPHLEALQQSASALAELDVLVNLAERAYTLNYTCPTFIDKPGIRITEGRHPVVEQVLNEPFIANPLNLSPQRRMLIITGPNMGGKSTYMRQTALIALMAYIGSYVPAQKVEIGPIDRIFTRVGAADDLASGRSTFMVEMTETANILHNATEYSLVLMDEIGRGTSTYDGLSLAWACAENLANKIKALTLFATHYFELTQLPEKMEDVANVHLDALEHGDTIAFMHSVQDGAASKSYGLAVAALAGVPKEVIKRARQKLRELESISPNAAATQVDGTQMSLLSVPEETSPAVEALENLDPDSLTPRQALEWIYRLKSLV</sequence>